<name>RETN_BOVIN</name>
<accession>Q762I5</accession>
<accession>A6QLM9</accession>
<accession>Q6IVW9</accession>
<dbReference type="EMBL" id="AB117718">
    <property type="protein sequence ID" value="BAC82041.1"/>
    <property type="molecule type" value="mRNA"/>
</dbReference>
<dbReference type="EMBL" id="DQ125240">
    <property type="protein sequence ID" value="AAZ32259.1"/>
    <property type="molecule type" value="Genomic_DNA"/>
</dbReference>
<dbReference type="EMBL" id="AY618903">
    <property type="protein sequence ID" value="AAT40142.2"/>
    <property type="molecule type" value="Genomic_DNA"/>
</dbReference>
<dbReference type="EMBL" id="BC148022">
    <property type="protein sequence ID" value="AAI48023.1"/>
    <property type="molecule type" value="mRNA"/>
</dbReference>
<dbReference type="RefSeq" id="NP_899206.1">
    <property type="nucleotide sequence ID" value="NM_183362.1"/>
</dbReference>
<dbReference type="SMR" id="Q762I5"/>
<dbReference type="FunCoup" id="Q762I5">
    <property type="interactions" value="39"/>
</dbReference>
<dbReference type="STRING" id="9913.ENSBTAP00000068334"/>
<dbReference type="PaxDb" id="9913-ENSBTAP00000006189"/>
<dbReference type="PeptideAtlas" id="Q762I5"/>
<dbReference type="Ensembl" id="ENSBTAT00000006189.4">
    <property type="protein sequence ID" value="ENSBTAP00000006189.2"/>
    <property type="gene ID" value="ENSBTAG00000004716.4"/>
</dbReference>
<dbReference type="GeneID" id="369020"/>
<dbReference type="KEGG" id="bta:369020"/>
<dbReference type="CTD" id="56729"/>
<dbReference type="VEuPathDB" id="HostDB:ENSBTAG00000004716"/>
<dbReference type="VGNC" id="VGNC:33877">
    <property type="gene designation" value="RETN"/>
</dbReference>
<dbReference type="eggNOG" id="ENOG502S9XN">
    <property type="taxonomic scope" value="Eukaryota"/>
</dbReference>
<dbReference type="GeneTree" id="ENSGT00390000016177"/>
<dbReference type="HOGENOM" id="CLU_150117_0_0_1"/>
<dbReference type="InParanoid" id="Q762I5"/>
<dbReference type="OMA" id="CQCAGID"/>
<dbReference type="OrthoDB" id="9531287at2759"/>
<dbReference type="TreeFam" id="TF337024"/>
<dbReference type="Reactome" id="R-BTA-6798695">
    <property type="pathway name" value="Neutrophil degranulation"/>
</dbReference>
<dbReference type="Proteomes" id="UP000009136">
    <property type="component" value="Chromosome 7"/>
</dbReference>
<dbReference type="Bgee" id="ENSBTAG00000004716">
    <property type="expression patterns" value="Expressed in monocyte and 74 other cell types or tissues"/>
</dbReference>
<dbReference type="GO" id="GO:0005615">
    <property type="term" value="C:extracellular space"/>
    <property type="evidence" value="ECO:0000314"/>
    <property type="project" value="AgBase"/>
</dbReference>
<dbReference type="GO" id="GO:0005179">
    <property type="term" value="F:hormone activity"/>
    <property type="evidence" value="ECO:0007669"/>
    <property type="project" value="UniProtKB-KW"/>
</dbReference>
<dbReference type="GO" id="GO:0050996">
    <property type="term" value="P:positive regulation of lipid catabolic process"/>
    <property type="evidence" value="ECO:0000315"/>
    <property type="project" value="AgBase"/>
</dbReference>
<dbReference type="CDD" id="cd16333">
    <property type="entry name" value="RELM"/>
    <property type="match status" value="1"/>
</dbReference>
<dbReference type="FunFam" id="2.60.40.4230:FF:000001">
    <property type="entry name" value="Resistin-like beta"/>
    <property type="match status" value="1"/>
</dbReference>
<dbReference type="Gene3D" id="2.60.40.4230">
    <property type="entry name" value="Resistin head domain"/>
    <property type="match status" value="1"/>
</dbReference>
<dbReference type="InterPro" id="IPR009714">
    <property type="entry name" value="RELM"/>
</dbReference>
<dbReference type="InterPro" id="IPR036262">
    <property type="entry name" value="Resistin-like_sf"/>
</dbReference>
<dbReference type="PANTHER" id="PTHR21101">
    <property type="entry name" value="RESISTIN"/>
    <property type="match status" value="1"/>
</dbReference>
<dbReference type="PANTHER" id="PTHR21101:SF11">
    <property type="entry name" value="RESISTIN"/>
    <property type="match status" value="1"/>
</dbReference>
<dbReference type="Pfam" id="PF06954">
    <property type="entry name" value="Resistin"/>
    <property type="match status" value="1"/>
</dbReference>
<dbReference type="SUPFAM" id="SSF111423">
    <property type="entry name" value="Resistin"/>
    <property type="match status" value="1"/>
</dbReference>
<gene>
    <name type="primary">RETN</name>
    <name type="synonym">RSTN</name>
</gene>
<comment type="function">
    <text evidence="1">Hormone that seems to suppress insulin ability to stimulate glucose uptake into adipose cells. Potentially links obesity to diabetes (By similarity).</text>
</comment>
<comment type="subunit">
    <text evidence="1">Homodimer; disulfide-linked.</text>
</comment>
<comment type="subcellular location">
    <subcellularLocation>
        <location evidence="1">Secreted</location>
    </subcellularLocation>
</comment>
<comment type="similarity">
    <text evidence="3">Belongs to the resistin/FIZZ family.</text>
</comment>
<protein>
    <recommendedName>
        <fullName>Resistin</fullName>
    </recommendedName>
</protein>
<keyword id="KW-0219">Diabetes mellitus</keyword>
<keyword id="KW-1015">Disulfide bond</keyword>
<keyword id="KW-0372">Hormone</keyword>
<keyword id="KW-0550">Obesity</keyword>
<keyword id="KW-1185">Reference proteome</keyword>
<keyword id="KW-0964">Secreted</keyword>
<keyword id="KW-0732">Signal</keyword>
<sequence>MKALSFLFIPVLGLLVCGQSLCPIDKAISEKIQEVTTSLVPGAVRIIGLDCRSVTSRGSLVTCPSGFAVTGCTCGSACGSWDVRAETTCHCQCAGMDWTGARCCRLHIQ</sequence>
<reference key="1">
    <citation type="journal article" date="2005" name="Anim. Sci. J.">
        <title>Gene expression of resistin and TNF-alpha in adipose tissue of Japanese Black steers and Holstein steers.</title>
        <authorList>
            <person name="Komatsu T."/>
            <person name="Itoh F."/>
            <person name="Hodate K."/>
            <person name="Hazegawa S."/>
            <person name="Obara Y."/>
            <person name="Kushibiki S."/>
        </authorList>
    </citation>
    <scope>NUCLEOTIDE SEQUENCE [MRNA]</scope>
</reference>
<reference key="2">
    <citation type="submission" date="2005-07" db="EMBL/GenBank/DDBJ databases">
        <title>Cloning and sequence of ADSF/resistin gene in Korean cattle.</title>
        <authorList>
            <person name="Chung E.R."/>
            <person name="Shin S.C."/>
            <person name="Kim W.T."/>
        </authorList>
    </citation>
    <scope>NUCLEOTIDE SEQUENCE [GENOMIC DNA]</scope>
    <source>
        <strain>Korean</strain>
    </source>
</reference>
<reference key="3">
    <citation type="journal article" date="2006" name="Asian-Australas. J. Anim. Sci.">
        <title>Characteristics of structure and expression pattern of ADSF/resistin gene in Korean native cattle.</title>
        <authorList>
            <person name="Kang H.K."/>
            <person name="Park J.A."/>
            <person name="Seo K.S."/>
            <person name="Kim S.H."/>
            <person name="Choi Y.J."/>
            <person name="Moon Y.S."/>
        </authorList>
        <dbReference type="AGRICOLA" id="IND43794247"/>
    </citation>
    <scope>NUCLEOTIDE SEQUENCE [GENOMIC DNA]</scope>
    <source>
        <strain>Korean</strain>
    </source>
</reference>
<reference key="4">
    <citation type="submission" date="2007-06" db="EMBL/GenBank/DDBJ databases">
        <authorList>
            <consortium name="NIH - Mammalian Gene Collection (MGC) project"/>
        </authorList>
    </citation>
    <scope>NUCLEOTIDE SEQUENCE [LARGE SCALE MRNA]</scope>
    <source>
        <tissue>Kidney</tissue>
    </source>
</reference>
<feature type="signal peptide" evidence="2">
    <location>
        <begin position="1"/>
        <end position="18"/>
    </location>
</feature>
<feature type="chain" id="PRO_0000236238" description="Resistin">
    <location>
        <begin position="19"/>
        <end position="109"/>
    </location>
</feature>
<feature type="disulfide bond" description="Interchain" evidence="1">
    <location>
        <position position="22"/>
    </location>
</feature>
<feature type="disulfide bond" evidence="1">
    <location>
        <begin position="51"/>
        <end position="104"/>
    </location>
</feature>
<feature type="disulfide bond" evidence="1">
    <location>
        <begin position="63"/>
        <end position="103"/>
    </location>
</feature>
<feature type="disulfide bond" evidence="1">
    <location>
        <begin position="72"/>
        <end position="89"/>
    </location>
</feature>
<feature type="disulfide bond" evidence="1">
    <location>
        <begin position="74"/>
        <end position="91"/>
    </location>
</feature>
<feature type="disulfide bond" evidence="1">
    <location>
        <begin position="78"/>
        <end position="93"/>
    </location>
</feature>
<proteinExistence type="inferred from homology"/>
<organism>
    <name type="scientific">Bos taurus</name>
    <name type="common">Bovine</name>
    <dbReference type="NCBI Taxonomy" id="9913"/>
    <lineage>
        <taxon>Eukaryota</taxon>
        <taxon>Metazoa</taxon>
        <taxon>Chordata</taxon>
        <taxon>Craniata</taxon>
        <taxon>Vertebrata</taxon>
        <taxon>Euteleostomi</taxon>
        <taxon>Mammalia</taxon>
        <taxon>Eutheria</taxon>
        <taxon>Laurasiatheria</taxon>
        <taxon>Artiodactyla</taxon>
        <taxon>Ruminantia</taxon>
        <taxon>Pecora</taxon>
        <taxon>Bovidae</taxon>
        <taxon>Bovinae</taxon>
        <taxon>Bos</taxon>
    </lineage>
</organism>
<evidence type="ECO:0000250" key="1"/>
<evidence type="ECO:0000255" key="2"/>
<evidence type="ECO:0000305" key="3"/>